<reference key="1">
    <citation type="journal article" date="2001" name="FEBS Lett.">
        <title>Mrp-dependent Na(+)/H(+) antiporters of Bacillus exhibit characteristics that are unanticipated for completely secondary active transporters.</title>
        <authorList>
            <person name="Ito M."/>
            <person name="Guffanti A.A."/>
            <person name="Krulwich T.A."/>
        </authorList>
    </citation>
    <scope>NUCLEOTIDE SEQUENCE [GENOMIC DNA]</scope>
    <scope>CHARACTERIZATION</scope>
</reference>
<reference key="2">
    <citation type="journal article" date="2011" name="Environ. Microbiol.">
        <title>Genome of alkaliphilic Bacillus pseudofirmus OF4 reveals adaptations that support the ability to grow in an external pH range from 7.5 to 11.4.</title>
        <authorList>
            <person name="Janto B."/>
            <person name="Ahmed A."/>
            <person name="Ito M."/>
            <person name="Liu J."/>
            <person name="Hicks D.B."/>
            <person name="Pagni S."/>
            <person name="Fackelmayer O.J."/>
            <person name="Smith T.A."/>
            <person name="Earl J."/>
            <person name="Elbourne L.D."/>
            <person name="Hassan K."/>
            <person name="Paulsen I.T."/>
            <person name="Kolsto A.B."/>
            <person name="Tourasse N.J."/>
            <person name="Ehrlich G.D."/>
            <person name="Boissy R."/>
            <person name="Ivey D.M."/>
            <person name="Li G."/>
            <person name="Xue Y."/>
            <person name="Ma Y."/>
            <person name="Hu F.Z."/>
            <person name="Krulwich T.A."/>
        </authorList>
    </citation>
    <scope>NUCLEOTIDE SEQUENCE [LARGE SCALE GENOMIC DNA]</scope>
    <source>
        <strain>ATCC BAA-2126 / JCM 17055 / OF4</strain>
    </source>
</reference>
<reference key="3">
    <citation type="journal article" date="2007" name="J. Bacteriol.">
        <title>Catalytic properties of Staphylococcus aureus and Bacillus members of the secondary cation/proton antiporter-3 (Mrp) family are revealed by an optimized assay in an Escherichia coli host.</title>
        <authorList>
            <person name="Swartz T.H."/>
            <person name="Ito M."/>
            <person name="Ohira T."/>
            <person name="Natsui S."/>
            <person name="Hicks D.B."/>
            <person name="Krulwich T.A."/>
        </authorList>
    </citation>
    <scope>CHARACTERIZATION</scope>
    <scope>PROBABLE FUNCTION IN ELECTROGENIC ANTIPORTER ACTIVITY</scope>
</reference>
<sequence length="158" mass="18356">MAFQILLNLVIAVIWVNFQNSYTAVDFLIGYVVGIFILFVLRRFLRFDFYMRRIWAIIKLISLFFKELILANIDVIKIVLSPKMNIQPGIVAVPTKLKTDWELSLLASLISLTPGTLSMDFSDDNKYIYIHAIDVPNKEKMIRDIHDTFERAILEVTK</sequence>
<feature type="chain" id="PRO_0000217093" description="Na(+)/H(+) antiporter subunit E">
    <location>
        <begin position="1"/>
        <end position="158"/>
    </location>
</feature>
<feature type="transmembrane region" description="Helical" evidence="2">
    <location>
        <begin position="22"/>
        <end position="41"/>
    </location>
</feature>
<feature type="transmembrane region" description="Helical" evidence="2">
    <location>
        <begin position="54"/>
        <end position="76"/>
    </location>
</feature>
<evidence type="ECO:0000250" key="1"/>
<evidence type="ECO:0000255" key="2"/>
<evidence type="ECO:0000305" key="3"/>
<proteinExistence type="evidence at protein level"/>
<dbReference type="EMBL" id="AF097740">
    <property type="protein sequence ID" value="AAF21816.1"/>
    <property type="molecule type" value="Genomic_DNA"/>
</dbReference>
<dbReference type="EMBL" id="CP001878">
    <property type="protein sequence ID" value="ADC50689.1"/>
    <property type="molecule type" value="Genomic_DNA"/>
</dbReference>
<dbReference type="RefSeq" id="WP_012958052.1">
    <property type="nucleotide sequence ID" value="NC_013791.2"/>
</dbReference>
<dbReference type="SMR" id="Q9RGZ1"/>
<dbReference type="STRING" id="398511.BpOF4_13190"/>
<dbReference type="KEGG" id="bpf:BpOF4_13190"/>
<dbReference type="eggNOG" id="COG1863">
    <property type="taxonomic scope" value="Bacteria"/>
</dbReference>
<dbReference type="HOGENOM" id="CLU_086615_3_2_9"/>
<dbReference type="Proteomes" id="UP000001544">
    <property type="component" value="Chromosome"/>
</dbReference>
<dbReference type="GO" id="GO:0005886">
    <property type="term" value="C:plasma membrane"/>
    <property type="evidence" value="ECO:0007669"/>
    <property type="project" value="UniProtKB-SubCell"/>
</dbReference>
<dbReference type="GO" id="GO:0015297">
    <property type="term" value="F:antiporter activity"/>
    <property type="evidence" value="ECO:0007669"/>
    <property type="project" value="UniProtKB-KW"/>
</dbReference>
<dbReference type="GO" id="GO:0008324">
    <property type="term" value="F:monoatomic cation transmembrane transporter activity"/>
    <property type="evidence" value="ECO:0007669"/>
    <property type="project" value="InterPro"/>
</dbReference>
<dbReference type="GO" id="GO:1902600">
    <property type="term" value="P:proton transmembrane transport"/>
    <property type="evidence" value="ECO:0007669"/>
    <property type="project" value="UniProtKB-KW"/>
</dbReference>
<dbReference type="GO" id="GO:0006814">
    <property type="term" value="P:sodium ion transport"/>
    <property type="evidence" value="ECO:0007669"/>
    <property type="project" value="UniProtKB-KW"/>
</dbReference>
<dbReference type="InterPro" id="IPR002758">
    <property type="entry name" value="Cation_antiport_E"/>
</dbReference>
<dbReference type="NCBIfam" id="NF009292">
    <property type="entry name" value="PRK12651.1-3"/>
    <property type="match status" value="1"/>
</dbReference>
<dbReference type="PANTHER" id="PTHR34584">
    <property type="entry name" value="NA(+)/H(+) ANTIPORTER SUBUNIT E1"/>
    <property type="match status" value="1"/>
</dbReference>
<dbReference type="PANTHER" id="PTHR34584:SF1">
    <property type="entry name" value="NA(+)_H(+) ANTIPORTER SUBUNIT E1"/>
    <property type="match status" value="1"/>
</dbReference>
<dbReference type="Pfam" id="PF01899">
    <property type="entry name" value="MNHE"/>
    <property type="match status" value="1"/>
</dbReference>
<dbReference type="PIRSF" id="PIRSF019239">
    <property type="entry name" value="MrpE"/>
    <property type="match status" value="1"/>
</dbReference>
<comment type="function">
    <text>Mnh complex is a Na(+)Li(+)/H(+) antiporter involved in Na(+) and/or Li(+) excretion and Na(+) resistance. Na(+)/H(+) antiport consumes a transmembrane electrical potential, and is thus inferred to be electrogenic. Does not transport K(+), Ca(2+) or Mg(2+).</text>
</comment>
<comment type="function">
    <text>Mrp complex is a Na(+)/H(+) antiporter involved in Na(+) excretion and Na(+) resistance.</text>
</comment>
<comment type="subunit">
    <text evidence="1">Forms a heterooligomeric complex that consists of seven subunits: MrpA, MrpB, MrpC, MrpD, MrpE, MrpF and MrpG.</text>
</comment>
<comment type="subcellular location">
    <subcellularLocation>
        <location evidence="3">Cell membrane</location>
        <topology evidence="3">Multi-pass membrane protein</topology>
    </subcellularLocation>
</comment>
<comment type="miscellaneous">
    <text>Mrp-dependent antiport apparently occurs by a secondary, proton motive force-dependent mechanism, but the similarity of several Mrp proteins to membrane-embedded subunits of energy-coupled NADH dehydrogenase complexes raises the possibility that there is a capacity for electron transport that could provide a primary energy coupling option for Mrp functions.</text>
</comment>
<comment type="similarity">
    <text evidence="3">Belongs to the CPA3 antiporters (TC 2.A.63) subunit E family.</text>
</comment>
<organism>
    <name type="scientific">Alkalihalophilus pseudofirmus (strain ATCC BAA-2126 / JCM 17055 / OF4)</name>
    <name type="common">Bacillus pseudofirmus</name>
    <dbReference type="NCBI Taxonomy" id="398511"/>
    <lineage>
        <taxon>Bacteria</taxon>
        <taxon>Bacillati</taxon>
        <taxon>Bacillota</taxon>
        <taxon>Bacilli</taxon>
        <taxon>Bacillales</taxon>
        <taxon>Bacillaceae</taxon>
        <taxon>Alkalihalophilus</taxon>
    </lineage>
</organism>
<keyword id="KW-0050">Antiport</keyword>
<keyword id="KW-1003">Cell membrane</keyword>
<keyword id="KW-0375">Hydrogen ion transport</keyword>
<keyword id="KW-0406">Ion transport</keyword>
<keyword id="KW-0472">Membrane</keyword>
<keyword id="KW-1185">Reference proteome</keyword>
<keyword id="KW-0915">Sodium</keyword>
<keyword id="KW-0739">Sodium transport</keyword>
<keyword id="KW-0812">Transmembrane</keyword>
<keyword id="KW-1133">Transmembrane helix</keyword>
<keyword id="KW-0813">Transport</keyword>
<accession>Q9RGZ1</accession>
<accession>D3FXH8</accession>
<protein>
    <recommendedName>
        <fullName>Na(+)/H(+) antiporter subunit E</fullName>
    </recommendedName>
    <alternativeName>
        <fullName>Mrp complex subunit E</fullName>
    </alternativeName>
    <alternativeName>
        <fullName>Multiple resistance and pH homeostasis protein E</fullName>
    </alternativeName>
</protein>
<gene>
    <name type="primary">mrpE</name>
    <name type="ordered locus">BpOF4_13190</name>
</gene>
<name>MRPE_ALKPO</name>